<name>APT_ALIB4</name>
<reference key="1">
    <citation type="journal article" date="2007" name="PLoS ONE">
        <title>The complete genome sequence and analysis of the Epsilonproteobacterium Arcobacter butzleri.</title>
        <authorList>
            <person name="Miller W.G."/>
            <person name="Parker C.T."/>
            <person name="Rubenfield M."/>
            <person name="Mendz G.L."/>
            <person name="Woesten M.M.S.M."/>
            <person name="Ussery D.W."/>
            <person name="Stolz J.F."/>
            <person name="Binnewies T.T."/>
            <person name="Hallin P.F."/>
            <person name="Wang G."/>
            <person name="Malek J.A."/>
            <person name="Rogosin A."/>
            <person name="Stanker L.H."/>
            <person name="Mandrell R.E."/>
        </authorList>
    </citation>
    <scope>NUCLEOTIDE SEQUENCE [LARGE SCALE GENOMIC DNA]</scope>
    <source>
        <strain>RM4018</strain>
    </source>
</reference>
<gene>
    <name evidence="1" type="primary">apt</name>
    <name type="ordered locus">Abu_0699</name>
</gene>
<dbReference type="EC" id="2.4.2.7" evidence="1"/>
<dbReference type="EMBL" id="CP000361">
    <property type="protein sequence ID" value="ABV66964.1"/>
    <property type="molecule type" value="Genomic_DNA"/>
</dbReference>
<dbReference type="RefSeq" id="WP_012012467.1">
    <property type="nucleotide sequence ID" value="NC_009850.1"/>
</dbReference>
<dbReference type="SMR" id="A8ESP0"/>
<dbReference type="STRING" id="367737.Abu_0699"/>
<dbReference type="GeneID" id="24304605"/>
<dbReference type="KEGG" id="abu:Abu_0699"/>
<dbReference type="eggNOG" id="COG0503">
    <property type="taxonomic scope" value="Bacteria"/>
</dbReference>
<dbReference type="HOGENOM" id="CLU_063339_3_0_7"/>
<dbReference type="UniPathway" id="UPA00588">
    <property type="reaction ID" value="UER00646"/>
</dbReference>
<dbReference type="Proteomes" id="UP000001136">
    <property type="component" value="Chromosome"/>
</dbReference>
<dbReference type="GO" id="GO:0005737">
    <property type="term" value="C:cytoplasm"/>
    <property type="evidence" value="ECO:0007669"/>
    <property type="project" value="UniProtKB-SubCell"/>
</dbReference>
<dbReference type="GO" id="GO:0002055">
    <property type="term" value="F:adenine binding"/>
    <property type="evidence" value="ECO:0007669"/>
    <property type="project" value="TreeGrafter"/>
</dbReference>
<dbReference type="GO" id="GO:0003999">
    <property type="term" value="F:adenine phosphoribosyltransferase activity"/>
    <property type="evidence" value="ECO:0007669"/>
    <property type="project" value="UniProtKB-UniRule"/>
</dbReference>
<dbReference type="GO" id="GO:0016208">
    <property type="term" value="F:AMP binding"/>
    <property type="evidence" value="ECO:0007669"/>
    <property type="project" value="TreeGrafter"/>
</dbReference>
<dbReference type="GO" id="GO:0006168">
    <property type="term" value="P:adenine salvage"/>
    <property type="evidence" value="ECO:0007669"/>
    <property type="project" value="InterPro"/>
</dbReference>
<dbReference type="GO" id="GO:0044209">
    <property type="term" value="P:AMP salvage"/>
    <property type="evidence" value="ECO:0007669"/>
    <property type="project" value="UniProtKB-UniRule"/>
</dbReference>
<dbReference type="GO" id="GO:0006166">
    <property type="term" value="P:purine ribonucleoside salvage"/>
    <property type="evidence" value="ECO:0007669"/>
    <property type="project" value="UniProtKB-KW"/>
</dbReference>
<dbReference type="CDD" id="cd06223">
    <property type="entry name" value="PRTases_typeI"/>
    <property type="match status" value="1"/>
</dbReference>
<dbReference type="FunFam" id="3.40.50.2020:FF:000021">
    <property type="entry name" value="Adenine phosphoribosyltransferase"/>
    <property type="match status" value="1"/>
</dbReference>
<dbReference type="Gene3D" id="3.40.50.2020">
    <property type="match status" value="1"/>
</dbReference>
<dbReference type="HAMAP" id="MF_00004">
    <property type="entry name" value="Aden_phosphoribosyltr"/>
    <property type="match status" value="1"/>
</dbReference>
<dbReference type="InterPro" id="IPR005764">
    <property type="entry name" value="Ade_phspho_trans"/>
</dbReference>
<dbReference type="InterPro" id="IPR000836">
    <property type="entry name" value="PRibTrfase_dom"/>
</dbReference>
<dbReference type="InterPro" id="IPR029057">
    <property type="entry name" value="PRTase-like"/>
</dbReference>
<dbReference type="InterPro" id="IPR050054">
    <property type="entry name" value="UPRTase/APRTase"/>
</dbReference>
<dbReference type="NCBIfam" id="TIGR01090">
    <property type="entry name" value="apt"/>
    <property type="match status" value="1"/>
</dbReference>
<dbReference type="NCBIfam" id="NF002634">
    <property type="entry name" value="PRK02304.1-3"/>
    <property type="match status" value="1"/>
</dbReference>
<dbReference type="NCBIfam" id="NF002636">
    <property type="entry name" value="PRK02304.1-5"/>
    <property type="match status" value="1"/>
</dbReference>
<dbReference type="PANTHER" id="PTHR32315">
    <property type="entry name" value="ADENINE PHOSPHORIBOSYLTRANSFERASE"/>
    <property type="match status" value="1"/>
</dbReference>
<dbReference type="PANTHER" id="PTHR32315:SF3">
    <property type="entry name" value="ADENINE PHOSPHORIBOSYLTRANSFERASE"/>
    <property type="match status" value="1"/>
</dbReference>
<dbReference type="Pfam" id="PF00156">
    <property type="entry name" value="Pribosyltran"/>
    <property type="match status" value="1"/>
</dbReference>
<dbReference type="SUPFAM" id="SSF53271">
    <property type="entry name" value="PRTase-like"/>
    <property type="match status" value="1"/>
</dbReference>
<dbReference type="PROSITE" id="PS00103">
    <property type="entry name" value="PUR_PYR_PR_TRANSFER"/>
    <property type="match status" value="1"/>
</dbReference>
<feature type="chain" id="PRO_0000321336" description="Adenine phosphoribosyltransferase">
    <location>
        <begin position="1"/>
        <end position="185"/>
    </location>
</feature>
<organism>
    <name type="scientific">Aliarcobacter butzleri (strain RM4018)</name>
    <name type="common">Arcobacter butzleri</name>
    <dbReference type="NCBI Taxonomy" id="367737"/>
    <lineage>
        <taxon>Bacteria</taxon>
        <taxon>Pseudomonadati</taxon>
        <taxon>Campylobacterota</taxon>
        <taxon>Epsilonproteobacteria</taxon>
        <taxon>Campylobacterales</taxon>
        <taxon>Arcobacteraceae</taxon>
        <taxon>Aliarcobacter</taxon>
    </lineage>
</organism>
<evidence type="ECO:0000255" key="1">
    <source>
        <dbReference type="HAMAP-Rule" id="MF_00004"/>
    </source>
</evidence>
<keyword id="KW-0963">Cytoplasm</keyword>
<keyword id="KW-0328">Glycosyltransferase</keyword>
<keyword id="KW-0660">Purine salvage</keyword>
<keyword id="KW-1185">Reference proteome</keyword>
<keyword id="KW-0808">Transferase</keyword>
<accession>A8ESP0</accession>
<proteinExistence type="inferred from homology"/>
<comment type="function">
    <text evidence="1">Catalyzes a salvage reaction resulting in the formation of AMP, that is energically less costly than de novo synthesis.</text>
</comment>
<comment type="catalytic activity">
    <reaction evidence="1">
        <text>AMP + diphosphate = 5-phospho-alpha-D-ribose 1-diphosphate + adenine</text>
        <dbReference type="Rhea" id="RHEA:16609"/>
        <dbReference type="ChEBI" id="CHEBI:16708"/>
        <dbReference type="ChEBI" id="CHEBI:33019"/>
        <dbReference type="ChEBI" id="CHEBI:58017"/>
        <dbReference type="ChEBI" id="CHEBI:456215"/>
        <dbReference type="EC" id="2.4.2.7"/>
    </reaction>
</comment>
<comment type="pathway">
    <text evidence="1">Purine metabolism; AMP biosynthesis via salvage pathway; AMP from adenine: step 1/1.</text>
</comment>
<comment type="subunit">
    <text evidence="1">Homodimer.</text>
</comment>
<comment type="subcellular location">
    <subcellularLocation>
        <location evidence="1">Cytoplasm</location>
    </subcellularLocation>
</comment>
<comment type="similarity">
    <text evidence="1">Belongs to the purine/pyrimidine phosphoribosyltransferase family.</text>
</comment>
<protein>
    <recommendedName>
        <fullName evidence="1">Adenine phosphoribosyltransferase</fullName>
        <shortName evidence="1">APRT</shortName>
        <ecNumber evidence="1">2.4.2.7</ecNumber>
    </recommendedName>
</protein>
<sequence length="185" mass="20759">MSEKNVLDENSKNILLDSIRTINDYPKPGIIFKDITTLLNNKNAFNLLMDHLEERYKSYNLDYIAGVEARGFFFASALASRLKIGFVPVRKKGKLPSTTICEKYELEYGFSEVELHLDAFNNEKNVNVLLIDDIIVSGGTAYAAANLIKKLNVNLVESCFLMNIAILDGAKKLSEISPVYCVLEI</sequence>